<name>OR1D5_PANTR</name>
<gene>
    <name type="primary">OR1D5</name>
</gene>
<proteinExistence type="inferred from homology"/>
<evidence type="ECO:0000255" key="1"/>
<evidence type="ECO:0000255" key="2">
    <source>
        <dbReference type="PROSITE-ProRule" id="PRU00521"/>
    </source>
</evidence>
<evidence type="ECO:0000305" key="3"/>
<comment type="function">
    <text evidence="3">Odorant receptor.</text>
</comment>
<comment type="subcellular location">
    <subcellularLocation>
        <location>Cell membrane</location>
        <topology>Multi-pass membrane protein</topology>
    </subcellularLocation>
</comment>
<comment type="similarity">
    <text evidence="2">Belongs to the G-protein coupled receptor 1 family.</text>
</comment>
<keyword id="KW-1003">Cell membrane</keyword>
<keyword id="KW-1015">Disulfide bond</keyword>
<keyword id="KW-0297">G-protein coupled receptor</keyword>
<keyword id="KW-0325">Glycoprotein</keyword>
<keyword id="KW-0472">Membrane</keyword>
<keyword id="KW-0552">Olfaction</keyword>
<keyword id="KW-0675">Receptor</keyword>
<keyword id="KW-1185">Reference proteome</keyword>
<keyword id="KW-0716">Sensory transduction</keyword>
<keyword id="KW-0807">Transducer</keyword>
<keyword id="KW-0812">Transmembrane</keyword>
<keyword id="KW-1133">Transmembrane helix</keyword>
<sequence>MDGDNQSENSQFLLLGISESPEQQQILFWMFLSMYLVTVLGNVLIILAISSDSRLHTPMYFFLANLSFTDLFFVTNTIPKMLVNLQSQNKAISYAGCLTQLYFLVSLVTLDNLILAVMAYDRYVAICCPLHYVTAMSPGLCVLLLSLCWGLSVFYGLLLTLLLTRVTFCGPREIHYLFCDMYILLRLACSNTHIIHTVLVATGCFIFLTPLGFMTTSYVRIVRTILQIPSASKKYKAFSTCASHLGVVSLFYGTLAMVYLQPLHTYSMKDSVATVMYAVVTPMMNPFIHSLRNKDMHGALGRVLRRLFQRPK</sequence>
<accession>Q9TUA6</accession>
<protein>
    <recommendedName>
        <fullName>Olfactory receptor 1D5</fullName>
    </recommendedName>
</protein>
<dbReference type="EMBL" id="AF101736">
    <property type="protein sequence ID" value="AAF03318.1"/>
    <property type="molecule type" value="Genomic_DNA"/>
</dbReference>
<dbReference type="RefSeq" id="NP_001009113.1">
    <property type="nucleotide sequence ID" value="NM_001009113.1"/>
</dbReference>
<dbReference type="SMR" id="Q9TUA6"/>
<dbReference type="STRING" id="9598.ENSPTRP00000014606"/>
<dbReference type="GlyCosmos" id="Q9TUA6">
    <property type="glycosylation" value="1 site, No reported glycans"/>
</dbReference>
<dbReference type="PaxDb" id="9598-ENSPTRP00000054946"/>
<dbReference type="GeneID" id="468144"/>
<dbReference type="KEGG" id="ptr:468144"/>
<dbReference type="CTD" id="8386"/>
<dbReference type="eggNOG" id="ENOG502T9JB">
    <property type="taxonomic scope" value="Eukaryota"/>
</dbReference>
<dbReference type="InParanoid" id="Q9TUA6"/>
<dbReference type="OrthoDB" id="13175at9604"/>
<dbReference type="Proteomes" id="UP000002277">
    <property type="component" value="Unplaced"/>
</dbReference>
<dbReference type="GO" id="GO:0005886">
    <property type="term" value="C:plasma membrane"/>
    <property type="evidence" value="ECO:0000318"/>
    <property type="project" value="GO_Central"/>
</dbReference>
<dbReference type="GO" id="GO:0004930">
    <property type="term" value="F:G protein-coupled receptor activity"/>
    <property type="evidence" value="ECO:0007669"/>
    <property type="project" value="UniProtKB-KW"/>
</dbReference>
<dbReference type="GO" id="GO:0004984">
    <property type="term" value="F:olfactory receptor activity"/>
    <property type="evidence" value="ECO:0000318"/>
    <property type="project" value="GO_Central"/>
</dbReference>
<dbReference type="GO" id="GO:0007165">
    <property type="term" value="P:signal transduction"/>
    <property type="evidence" value="ECO:0000318"/>
    <property type="project" value="GO_Central"/>
</dbReference>
<dbReference type="CDD" id="cd15918">
    <property type="entry name" value="7tmA_OR1_7-like"/>
    <property type="match status" value="1"/>
</dbReference>
<dbReference type="FunFam" id="1.20.1070.10:FF:000009">
    <property type="entry name" value="Olfactory receptor"/>
    <property type="match status" value="1"/>
</dbReference>
<dbReference type="Gene3D" id="1.20.1070.10">
    <property type="entry name" value="Rhodopsin 7-helix transmembrane proteins"/>
    <property type="match status" value="1"/>
</dbReference>
<dbReference type="InterPro" id="IPR000276">
    <property type="entry name" value="GPCR_Rhodpsn"/>
</dbReference>
<dbReference type="InterPro" id="IPR017452">
    <property type="entry name" value="GPCR_Rhodpsn_7TM"/>
</dbReference>
<dbReference type="InterPro" id="IPR000725">
    <property type="entry name" value="Olfact_rcpt"/>
</dbReference>
<dbReference type="PANTHER" id="PTHR48001">
    <property type="entry name" value="OLFACTORY RECEPTOR"/>
    <property type="match status" value="1"/>
</dbReference>
<dbReference type="Pfam" id="PF13853">
    <property type="entry name" value="7tm_4"/>
    <property type="match status" value="1"/>
</dbReference>
<dbReference type="PRINTS" id="PR00237">
    <property type="entry name" value="GPCRRHODOPSN"/>
</dbReference>
<dbReference type="PRINTS" id="PR00245">
    <property type="entry name" value="OLFACTORYR"/>
</dbReference>
<dbReference type="SUPFAM" id="SSF81321">
    <property type="entry name" value="Family A G protein-coupled receptor-like"/>
    <property type="match status" value="1"/>
</dbReference>
<dbReference type="PROSITE" id="PS00237">
    <property type="entry name" value="G_PROTEIN_RECEP_F1_1"/>
    <property type="match status" value="1"/>
</dbReference>
<dbReference type="PROSITE" id="PS50262">
    <property type="entry name" value="G_PROTEIN_RECEP_F1_2"/>
    <property type="match status" value="1"/>
</dbReference>
<organism>
    <name type="scientific">Pan troglodytes</name>
    <name type="common">Chimpanzee</name>
    <dbReference type="NCBI Taxonomy" id="9598"/>
    <lineage>
        <taxon>Eukaryota</taxon>
        <taxon>Metazoa</taxon>
        <taxon>Chordata</taxon>
        <taxon>Craniata</taxon>
        <taxon>Vertebrata</taxon>
        <taxon>Euteleostomi</taxon>
        <taxon>Mammalia</taxon>
        <taxon>Eutheria</taxon>
        <taxon>Euarchontoglires</taxon>
        <taxon>Primates</taxon>
        <taxon>Haplorrhini</taxon>
        <taxon>Catarrhini</taxon>
        <taxon>Hominidae</taxon>
        <taxon>Pan</taxon>
    </lineage>
</organism>
<reference key="1">
    <citation type="journal article" date="1999" name="Genomics">
        <title>Primate evolution of an olfactory receptor cluster: diversification by gene conversion and recent emergence of pseudogenes.</title>
        <authorList>
            <person name="Sharon D."/>
            <person name="Glusman G."/>
            <person name="Pilpel Y."/>
            <person name="Khen M."/>
            <person name="Gruetzner F."/>
            <person name="Haaf T."/>
            <person name="Lancet D."/>
        </authorList>
    </citation>
    <scope>NUCLEOTIDE SEQUENCE [GENOMIC DNA]</scope>
</reference>
<feature type="chain" id="PRO_0000150424" description="Olfactory receptor 1D5">
    <location>
        <begin position="1"/>
        <end position="312"/>
    </location>
</feature>
<feature type="topological domain" description="Extracellular" evidence="1">
    <location>
        <begin position="1"/>
        <end position="25"/>
    </location>
</feature>
<feature type="transmembrane region" description="Helical; Name=1" evidence="1">
    <location>
        <begin position="26"/>
        <end position="49"/>
    </location>
</feature>
<feature type="topological domain" description="Cytoplasmic" evidence="1">
    <location>
        <begin position="50"/>
        <end position="57"/>
    </location>
</feature>
<feature type="transmembrane region" description="Helical; Name=2" evidence="1">
    <location>
        <begin position="58"/>
        <end position="79"/>
    </location>
</feature>
<feature type="topological domain" description="Extracellular" evidence="1">
    <location>
        <begin position="80"/>
        <end position="100"/>
    </location>
</feature>
<feature type="transmembrane region" description="Helical; Name=3" evidence="1">
    <location>
        <begin position="101"/>
        <end position="120"/>
    </location>
</feature>
<feature type="topological domain" description="Cytoplasmic" evidence="1">
    <location>
        <begin position="121"/>
        <end position="140"/>
    </location>
</feature>
<feature type="transmembrane region" description="Helical; Name=4" evidence="1">
    <location>
        <begin position="141"/>
        <end position="158"/>
    </location>
</feature>
<feature type="topological domain" description="Extracellular" evidence="1">
    <location>
        <begin position="159"/>
        <end position="196"/>
    </location>
</feature>
<feature type="transmembrane region" description="Helical; Name=5" evidence="1">
    <location>
        <begin position="197"/>
        <end position="220"/>
    </location>
</feature>
<feature type="topological domain" description="Cytoplasmic" evidence="1">
    <location>
        <begin position="221"/>
        <end position="237"/>
    </location>
</feature>
<feature type="transmembrane region" description="Helical; Name=6" evidence="1">
    <location>
        <begin position="238"/>
        <end position="260"/>
    </location>
</feature>
<feature type="topological domain" description="Extracellular" evidence="1">
    <location>
        <begin position="261"/>
        <end position="271"/>
    </location>
</feature>
<feature type="transmembrane region" description="Helical; Name=7" evidence="1">
    <location>
        <begin position="272"/>
        <end position="291"/>
    </location>
</feature>
<feature type="topological domain" description="Cytoplasmic" evidence="1">
    <location>
        <begin position="292"/>
        <end position="312"/>
    </location>
</feature>
<feature type="glycosylation site" description="N-linked (GlcNAc...) asparagine" evidence="1">
    <location>
        <position position="5"/>
    </location>
</feature>
<feature type="disulfide bond" evidence="2">
    <location>
        <begin position="97"/>
        <end position="189"/>
    </location>
</feature>